<reference key="1">
    <citation type="journal article" date="2001" name="Proc. Natl. Acad. Sci. U.S.A.">
        <title>Complete genome sequence of an M1 strain of Streptococcus pyogenes.</title>
        <authorList>
            <person name="Ferretti J.J."/>
            <person name="McShan W.M."/>
            <person name="Ajdic D.J."/>
            <person name="Savic D.J."/>
            <person name="Savic G."/>
            <person name="Lyon K."/>
            <person name="Primeaux C."/>
            <person name="Sezate S."/>
            <person name="Suvorov A.N."/>
            <person name="Kenton S."/>
            <person name="Lai H.S."/>
            <person name="Lin S.P."/>
            <person name="Qian Y."/>
            <person name="Jia H.G."/>
            <person name="Najar F.Z."/>
            <person name="Ren Q."/>
            <person name="Zhu H."/>
            <person name="Song L."/>
            <person name="White J."/>
            <person name="Yuan X."/>
            <person name="Clifton S.W."/>
            <person name="Roe B.A."/>
            <person name="McLaughlin R.E."/>
        </authorList>
    </citation>
    <scope>NUCLEOTIDE SEQUENCE [LARGE SCALE GENOMIC DNA]</scope>
    <source>
        <strain>ATCC 700294 / SF370 / Serotype M1</strain>
    </source>
</reference>
<reference key="2">
    <citation type="journal article" date="2005" name="J. Infect. Dis.">
        <title>Evolutionary origin and emergence of a highly successful clone of serotype M1 group A Streptococcus involved multiple horizontal gene transfer events.</title>
        <authorList>
            <person name="Sumby P."/>
            <person name="Porcella S.F."/>
            <person name="Madrigal A.G."/>
            <person name="Barbian K.D."/>
            <person name="Virtaneva K."/>
            <person name="Ricklefs S.M."/>
            <person name="Sturdevant D.E."/>
            <person name="Graham M.R."/>
            <person name="Vuopio-Varkila J."/>
            <person name="Hoe N.P."/>
            <person name="Musser J.M."/>
        </authorList>
    </citation>
    <scope>NUCLEOTIDE SEQUENCE [LARGE SCALE GENOMIC DNA]</scope>
    <source>
        <strain>ATCC BAA-947 / MGAS5005 / Serotype M1</strain>
    </source>
</reference>
<feature type="chain" id="PRO_0000162036" description="Uncharacterized RNA methyltransferase SPy_1606/M5005_Spy1319">
    <location>
        <begin position="1"/>
        <end position="451"/>
    </location>
</feature>
<feature type="domain" description="TRAM" evidence="2">
    <location>
        <begin position="2"/>
        <end position="60"/>
    </location>
</feature>
<feature type="active site" description="Nucleophile" evidence="3">
    <location>
        <position position="408"/>
    </location>
</feature>
<feature type="binding site" evidence="1">
    <location>
        <position position="73"/>
    </location>
    <ligand>
        <name>[4Fe-4S] cluster</name>
        <dbReference type="ChEBI" id="CHEBI:49883"/>
    </ligand>
</feature>
<feature type="binding site" evidence="1">
    <location>
        <position position="79"/>
    </location>
    <ligand>
        <name>[4Fe-4S] cluster</name>
        <dbReference type="ChEBI" id="CHEBI:49883"/>
    </ligand>
</feature>
<feature type="binding site" evidence="1">
    <location>
        <position position="82"/>
    </location>
    <ligand>
        <name>[4Fe-4S] cluster</name>
        <dbReference type="ChEBI" id="CHEBI:49883"/>
    </ligand>
</feature>
<feature type="binding site" evidence="1">
    <location>
        <position position="162"/>
    </location>
    <ligand>
        <name>[4Fe-4S] cluster</name>
        <dbReference type="ChEBI" id="CHEBI:49883"/>
    </ligand>
</feature>
<feature type="binding site" evidence="3">
    <location>
        <position position="283"/>
    </location>
    <ligand>
        <name>S-adenosyl-L-methionine</name>
        <dbReference type="ChEBI" id="CHEBI:59789"/>
    </ligand>
</feature>
<feature type="binding site" evidence="3">
    <location>
        <position position="312"/>
    </location>
    <ligand>
        <name>S-adenosyl-L-methionine</name>
        <dbReference type="ChEBI" id="CHEBI:59789"/>
    </ligand>
</feature>
<feature type="binding site" evidence="3">
    <location>
        <position position="333"/>
    </location>
    <ligand>
        <name>S-adenosyl-L-methionine</name>
        <dbReference type="ChEBI" id="CHEBI:59789"/>
    </ligand>
</feature>
<feature type="binding site" evidence="3">
    <location>
        <position position="381"/>
    </location>
    <ligand>
        <name>S-adenosyl-L-methionine</name>
        <dbReference type="ChEBI" id="CHEBI:59789"/>
    </ligand>
</feature>
<proteinExistence type="inferred from homology"/>
<evidence type="ECO:0000250" key="1"/>
<evidence type="ECO:0000255" key="2">
    <source>
        <dbReference type="PROSITE-ProRule" id="PRU00208"/>
    </source>
</evidence>
<evidence type="ECO:0000255" key="3">
    <source>
        <dbReference type="PROSITE-ProRule" id="PRU01024"/>
    </source>
</evidence>
<protein>
    <recommendedName>
        <fullName>Uncharacterized RNA methyltransferase SPy_1606/M5005_Spy1319</fullName>
        <ecNumber>2.1.1.-</ecNumber>
    </recommendedName>
</protein>
<accession>Q99YP3</accession>
<accession>Q48XI8</accession>
<comment type="similarity">
    <text evidence="3">Belongs to the class I-like SAM-binding methyltransferase superfamily. RNA M5U methyltransferase family.</text>
</comment>
<gene>
    <name type="ordered locus">SPy_1606</name>
    <name type="ordered locus">M5005_Spy1319</name>
</gene>
<name>Y1606_STRP1</name>
<organism>
    <name type="scientific">Streptococcus pyogenes serotype M1</name>
    <dbReference type="NCBI Taxonomy" id="301447"/>
    <lineage>
        <taxon>Bacteria</taxon>
        <taxon>Bacillati</taxon>
        <taxon>Bacillota</taxon>
        <taxon>Bacilli</taxon>
        <taxon>Lactobacillales</taxon>
        <taxon>Streptococcaceae</taxon>
        <taxon>Streptococcus</taxon>
    </lineage>
</organism>
<sequence>MVVKVKQKIPLKIKRMGINGEGIGFYQKTLVFVPGALKGEDIFCQITAVKRNFAEAKLLTVNKASKNRVKPACSVYETCGGCQIMHLAYPKQLDFKDDVIRQALKKFKPTGYEQFEIRPTLGMKKPDHYRAKLQFQLRSFGGTVKAGLFSQGSHRLVPIDNCLVQDQLTQDIINKITQLVDKYKLPIYNERKIAGIRTIMVRKAQASDQVQIIVVSSKEVRLANFIGELTKAFPQVKTVALNSNRSKSSEIYGDETEILWGQEAIHEEVLDYGFALSPRAFYQLNPQQTEVLYGEVVKALDVGSKDHIIDAYCGVGSIGFAFAGKVKSVRGMDIIPEAIEDAQKNAKAMGFDNAYYEAGKAEDIISKWYKQGYRADAVIVDPPRTGLDDKLLKTILHYQPKQMVYVSCNTSTLARDLVQLTKVYDVHYIQSVDMFPHTARTEAVVKLQKRV</sequence>
<keyword id="KW-0004">4Fe-4S</keyword>
<keyword id="KW-0408">Iron</keyword>
<keyword id="KW-0411">Iron-sulfur</keyword>
<keyword id="KW-0479">Metal-binding</keyword>
<keyword id="KW-0489">Methyltransferase</keyword>
<keyword id="KW-1185">Reference proteome</keyword>
<keyword id="KW-0949">S-adenosyl-L-methionine</keyword>
<keyword id="KW-0808">Transferase</keyword>
<dbReference type="EC" id="2.1.1.-"/>
<dbReference type="EMBL" id="AE004092">
    <property type="protein sequence ID" value="AAK34383.1"/>
    <property type="molecule type" value="Genomic_DNA"/>
</dbReference>
<dbReference type="EMBL" id="CP000017">
    <property type="protein sequence ID" value="AAZ51937.1"/>
    <property type="molecule type" value="Genomic_DNA"/>
</dbReference>
<dbReference type="RefSeq" id="NP_269662.1">
    <property type="nucleotide sequence ID" value="NC_002737.2"/>
</dbReference>
<dbReference type="SMR" id="Q99YP3"/>
<dbReference type="PaxDb" id="1314-HKU360_01358"/>
<dbReference type="KEGG" id="spy:SPy_1606"/>
<dbReference type="KEGG" id="spz:M5005_Spy1319"/>
<dbReference type="PATRIC" id="fig|160490.10.peg.1400"/>
<dbReference type="HOGENOM" id="CLU_014689_7_1_9"/>
<dbReference type="OMA" id="SCQWLEK"/>
<dbReference type="Proteomes" id="UP000000750">
    <property type="component" value="Chromosome"/>
</dbReference>
<dbReference type="GO" id="GO:0051539">
    <property type="term" value="F:4 iron, 4 sulfur cluster binding"/>
    <property type="evidence" value="ECO:0007669"/>
    <property type="project" value="UniProtKB-KW"/>
</dbReference>
<dbReference type="GO" id="GO:0046872">
    <property type="term" value="F:metal ion binding"/>
    <property type="evidence" value="ECO:0007669"/>
    <property type="project" value="UniProtKB-KW"/>
</dbReference>
<dbReference type="GO" id="GO:0070041">
    <property type="term" value="F:rRNA (uridine-C5-)-methyltransferase activity"/>
    <property type="evidence" value="ECO:0007669"/>
    <property type="project" value="TreeGrafter"/>
</dbReference>
<dbReference type="GO" id="GO:0070475">
    <property type="term" value="P:rRNA base methylation"/>
    <property type="evidence" value="ECO:0007669"/>
    <property type="project" value="TreeGrafter"/>
</dbReference>
<dbReference type="CDD" id="cd02440">
    <property type="entry name" value="AdoMet_MTases"/>
    <property type="match status" value="1"/>
</dbReference>
<dbReference type="FunFam" id="3.40.50.150:FF:000009">
    <property type="entry name" value="23S rRNA (Uracil(1939)-C(5))-methyltransferase RlmD"/>
    <property type="match status" value="1"/>
</dbReference>
<dbReference type="FunFam" id="2.40.50.140:FF:000097">
    <property type="entry name" value="23S rRNA (uracil(1939)-C(5))-methyltransferase RlmD"/>
    <property type="match status" value="1"/>
</dbReference>
<dbReference type="FunFam" id="2.40.50.1070:FF:000003">
    <property type="entry name" value="23S rRNA (Uracil-5-)-methyltransferase RumA"/>
    <property type="match status" value="1"/>
</dbReference>
<dbReference type="Gene3D" id="2.40.50.1070">
    <property type="match status" value="1"/>
</dbReference>
<dbReference type="Gene3D" id="2.40.50.140">
    <property type="entry name" value="Nucleic acid-binding proteins"/>
    <property type="match status" value="1"/>
</dbReference>
<dbReference type="Gene3D" id="3.40.50.150">
    <property type="entry name" value="Vaccinia Virus protein VP39"/>
    <property type="match status" value="1"/>
</dbReference>
<dbReference type="InterPro" id="IPR030390">
    <property type="entry name" value="MeTrfase_TrmA_AS"/>
</dbReference>
<dbReference type="InterPro" id="IPR030391">
    <property type="entry name" value="MeTrfase_TrmA_CS"/>
</dbReference>
<dbReference type="InterPro" id="IPR012340">
    <property type="entry name" value="NA-bd_OB-fold"/>
</dbReference>
<dbReference type="InterPro" id="IPR029063">
    <property type="entry name" value="SAM-dependent_MTases_sf"/>
</dbReference>
<dbReference type="InterPro" id="IPR002792">
    <property type="entry name" value="TRAM_dom"/>
</dbReference>
<dbReference type="InterPro" id="IPR010280">
    <property type="entry name" value="U5_MeTrfase_fam"/>
</dbReference>
<dbReference type="NCBIfam" id="TIGR00479">
    <property type="entry name" value="rumA"/>
    <property type="match status" value="1"/>
</dbReference>
<dbReference type="PANTHER" id="PTHR11061:SF45">
    <property type="match status" value="1"/>
</dbReference>
<dbReference type="PANTHER" id="PTHR11061">
    <property type="entry name" value="RNA M5U METHYLTRANSFERASE"/>
    <property type="match status" value="1"/>
</dbReference>
<dbReference type="Pfam" id="PF01938">
    <property type="entry name" value="TRAM"/>
    <property type="match status" value="1"/>
</dbReference>
<dbReference type="Pfam" id="PF05958">
    <property type="entry name" value="tRNA_U5-meth_tr"/>
    <property type="match status" value="1"/>
</dbReference>
<dbReference type="SUPFAM" id="SSF50249">
    <property type="entry name" value="Nucleic acid-binding proteins"/>
    <property type="match status" value="1"/>
</dbReference>
<dbReference type="SUPFAM" id="SSF53335">
    <property type="entry name" value="S-adenosyl-L-methionine-dependent methyltransferases"/>
    <property type="match status" value="1"/>
</dbReference>
<dbReference type="PROSITE" id="PS51687">
    <property type="entry name" value="SAM_MT_RNA_M5U"/>
    <property type="match status" value="1"/>
</dbReference>
<dbReference type="PROSITE" id="PS50926">
    <property type="entry name" value="TRAM"/>
    <property type="match status" value="1"/>
</dbReference>
<dbReference type="PROSITE" id="PS01230">
    <property type="entry name" value="TRMA_1"/>
    <property type="match status" value="1"/>
</dbReference>
<dbReference type="PROSITE" id="PS01231">
    <property type="entry name" value="TRMA_2"/>
    <property type="match status" value="1"/>
</dbReference>